<dbReference type="EMBL" id="AF294755">
    <property type="protein sequence ID" value="AAK92042.1"/>
    <property type="molecule type" value="mRNA"/>
</dbReference>
<dbReference type="SMR" id="Q8MKH2"/>
<dbReference type="GlyCosmos" id="Q8MKH2">
    <property type="glycosylation" value="1 site, No reported glycans"/>
</dbReference>
<dbReference type="GO" id="GO:0005615">
    <property type="term" value="C:extracellular space"/>
    <property type="evidence" value="ECO:0007669"/>
    <property type="project" value="UniProtKB-KW"/>
</dbReference>
<dbReference type="GO" id="GO:0005125">
    <property type="term" value="F:cytokine activity"/>
    <property type="evidence" value="ECO:0007669"/>
    <property type="project" value="UniProtKB-KW"/>
</dbReference>
<dbReference type="GO" id="GO:0008083">
    <property type="term" value="F:growth factor activity"/>
    <property type="evidence" value="ECO:0007669"/>
    <property type="project" value="UniProtKB-KW"/>
</dbReference>
<dbReference type="GO" id="GO:0005134">
    <property type="term" value="F:interleukin-2 receptor binding"/>
    <property type="evidence" value="ECO:0007669"/>
    <property type="project" value="InterPro"/>
</dbReference>
<dbReference type="GO" id="GO:0002250">
    <property type="term" value="P:adaptive immune response"/>
    <property type="evidence" value="ECO:0007669"/>
    <property type="project" value="UniProtKB-KW"/>
</dbReference>
<dbReference type="FunFam" id="1.20.1250.10:FF:000025">
    <property type="entry name" value="Interleukin-2"/>
    <property type="match status" value="1"/>
</dbReference>
<dbReference type="Gene3D" id="1.20.1250.10">
    <property type="match status" value="1"/>
</dbReference>
<dbReference type="InterPro" id="IPR009079">
    <property type="entry name" value="4_helix_cytokine-like_core"/>
</dbReference>
<dbReference type="InterPro" id="IPR000779">
    <property type="entry name" value="IL-2"/>
</dbReference>
<dbReference type="InterPro" id="IPR030477">
    <property type="entry name" value="IL-2_CS"/>
</dbReference>
<dbReference type="PANTHER" id="PTHR48487">
    <property type="entry name" value="INTERLEUKIN-2"/>
    <property type="match status" value="1"/>
</dbReference>
<dbReference type="PANTHER" id="PTHR48487:SF1">
    <property type="entry name" value="INTERLEUKIN-2"/>
    <property type="match status" value="1"/>
</dbReference>
<dbReference type="Pfam" id="PF00715">
    <property type="entry name" value="IL2"/>
    <property type="match status" value="1"/>
</dbReference>
<dbReference type="PRINTS" id="PR00265">
    <property type="entry name" value="INTERLEUKIN2"/>
</dbReference>
<dbReference type="SMART" id="SM00189">
    <property type="entry name" value="IL2"/>
    <property type="match status" value="1"/>
</dbReference>
<dbReference type="SUPFAM" id="SSF47266">
    <property type="entry name" value="4-helical cytokines"/>
    <property type="match status" value="1"/>
</dbReference>
<dbReference type="PROSITE" id="PS00424">
    <property type="entry name" value="INTERLEUKIN_2"/>
    <property type="match status" value="1"/>
</dbReference>
<keyword id="KW-1064">Adaptive immunity</keyword>
<keyword id="KW-0202">Cytokine</keyword>
<keyword id="KW-1015">Disulfide bond</keyword>
<keyword id="KW-0325">Glycoprotein</keyword>
<keyword id="KW-0339">Growth factor</keyword>
<keyword id="KW-0391">Immunity</keyword>
<keyword id="KW-0964">Secreted</keyword>
<keyword id="KW-0732">Signal</keyword>
<organism>
    <name type="scientific">Saimiri sciureus</name>
    <name type="common">Common squirrel monkey</name>
    <dbReference type="NCBI Taxonomy" id="9521"/>
    <lineage>
        <taxon>Eukaryota</taxon>
        <taxon>Metazoa</taxon>
        <taxon>Chordata</taxon>
        <taxon>Craniata</taxon>
        <taxon>Vertebrata</taxon>
        <taxon>Euteleostomi</taxon>
        <taxon>Mammalia</taxon>
        <taxon>Eutheria</taxon>
        <taxon>Euarchontoglires</taxon>
        <taxon>Primates</taxon>
        <taxon>Haplorrhini</taxon>
        <taxon>Platyrrhini</taxon>
        <taxon>Cebidae</taxon>
        <taxon>Saimiriinae</taxon>
        <taxon>Saimiri</taxon>
    </lineage>
</organism>
<comment type="function">
    <text evidence="2">Cytokine produced by activated CD4-positive helper T-cells and to a lesser extend activated CD8-positive T-cells and natural killer (NK) cells that plays pivotal roles in the immune response and tolerance. Binds to a receptor complex composed of either the high-affinity trimeric IL-2R (IL2RA/CD25, IL2RB/CD122 and IL2RG/CD132) or the low-affinity dimeric IL-2R (IL2RB and IL2RG). Interaction with the receptor leads to oligomerization and conformation changes in the IL-2R subunits resulting in downstream signaling starting with phosphorylation of JAK1 and JAK3. In turn, JAK1 and JAK3 phosphorylate the receptor to form a docking site leading to the phosphorylation of several substrates including STAT5. This process leads to activation of several pathways including STAT, phosphoinositide-3-kinase/PI3K and mitogen-activated protein kinase/MAPK pathways. Functions as a T-cell growth factor and can increase NK-cell cytolytic activity as well. Promotes strong proliferation of activated B-cells and subsequently immunoglobulin production. Plays a pivotal role in regulating the adaptive immune system by controlling the survival and proliferation of regulatory T-cells, which are required for the maintenance of immune tolerance. Moreover, participates in the differentiation and homeostasis of effector T-cell subsets, including Th1, Th2, Th17 as well as memory CD8-positive T-cells.</text>
</comment>
<comment type="subcellular location">
    <subcellularLocation>
        <location>Secreted</location>
    </subcellularLocation>
</comment>
<comment type="similarity">
    <text evidence="3">Belongs to the IL-2 family.</text>
</comment>
<gene>
    <name type="primary">IL2</name>
</gene>
<accession>Q8MKH2</accession>
<sequence length="154" mass="17658">MYRMQLLSCIALSLALITNSAPTSSSTKKTQLQLEHLLLDLQMLLNGINNYKNPKLTRMLTFKFYLPKKATELKHLQCLEEELKPLEEVLNLAQSKNFHLRDTRDIISNINVLVLELKGSETTFTCEYDDDTATIIEFLNGWITFCQSIISTLT</sequence>
<proteinExistence type="evidence at transcript level"/>
<name>IL2_SAISC</name>
<evidence type="ECO:0000250" key="1"/>
<evidence type="ECO:0000250" key="2">
    <source>
        <dbReference type="UniProtKB" id="P60568"/>
    </source>
</evidence>
<evidence type="ECO:0000305" key="3"/>
<reference key="1">
    <citation type="journal article" date="2002" name="Immunogenetics">
        <title>Molecular cloning, characterization, and quantification of squirrel monkey (Saimiri sciureus) Th1 and Th2 cytokines.</title>
        <authorList>
            <person name="Heraud J.M."/>
            <person name="Lavergne A."/>
            <person name="Kazanji M."/>
        </authorList>
    </citation>
    <scope>NUCLEOTIDE SEQUENCE [MRNA]</scope>
</reference>
<feature type="signal peptide" evidence="1">
    <location>
        <begin position="1"/>
        <end position="20"/>
    </location>
</feature>
<feature type="chain" id="PRO_0000015501" description="Interleukin-2">
    <location>
        <begin position="21"/>
        <end position="154"/>
    </location>
</feature>
<feature type="glycosylation site" description="O-linked (GalNAc...) threonine" evidence="1">
    <location>
        <position position="23"/>
    </location>
</feature>
<feature type="disulfide bond" evidence="1">
    <location>
        <begin position="78"/>
        <end position="126"/>
    </location>
</feature>
<protein>
    <recommendedName>
        <fullName>Interleukin-2</fullName>
        <shortName>IL-2</shortName>
    </recommendedName>
    <alternativeName>
        <fullName>T-cell growth factor</fullName>
        <shortName>TCGF</shortName>
    </alternativeName>
</protein>